<organism>
    <name type="scientific">Mus musculus</name>
    <name type="common">Mouse</name>
    <dbReference type="NCBI Taxonomy" id="10090"/>
    <lineage>
        <taxon>Eukaryota</taxon>
        <taxon>Metazoa</taxon>
        <taxon>Chordata</taxon>
        <taxon>Craniata</taxon>
        <taxon>Vertebrata</taxon>
        <taxon>Euteleostomi</taxon>
        <taxon>Mammalia</taxon>
        <taxon>Eutheria</taxon>
        <taxon>Euarchontoglires</taxon>
        <taxon>Glires</taxon>
        <taxon>Rodentia</taxon>
        <taxon>Myomorpha</taxon>
        <taxon>Muroidea</taxon>
        <taxon>Muridae</taxon>
        <taxon>Murinae</taxon>
        <taxon>Mus</taxon>
        <taxon>Mus</taxon>
    </lineage>
</organism>
<name>TIE2_MOUSE</name>
<sequence length="1122" mass="125701">MDSLAGLVLCGVSLLLYGVVEGAMDLILINSLPLVSDAETSLTCIASGWHPHEPITIGRDFEALMNQHQDPLEVTQDVTREWAKKVVWKREKASKINGAYFCEGRVRGQAIRIRTMKMRQQASFLPATLTMTVDRGDNVNISFKKVLIKEEDAVIYKNGSFIHSVPRHEVPDILEVHLPHAQPQDAGVYSARYIGGNLFTSAFTRLIVRRCEAQKWGPDCSRPCTTCKNNGVCHEDTGECICPPGFMGRTCEKACEPHTFGRTCKERCSGPEGCKSYVFCLPDPYGCSCATGWRGLQCNEACPSGYYGPDCKLRCHCTNEEICDRFQGCLCSQGWQGLQCEKEGRPRMTPQIEDLPDHIEVNSGKFNPICKASGWPLPTSEEMTLVKPDGTVLQPNDFNYTDRFSVAIFTVNRVLPPDSGVWVCSVNTVAGMVEKPFNISVKVLPEPLHAPNVIDTGHNFAIINISSEPYFGDGPIKSKKLFYKPVNQAWKYIEVTNEIFTLNYLEPRTDYELCVQLARPGEGGEGHPGPVRRFTTASIGLPPPRGLSLLPKSQTALNLTWQPIFTNSEDEFYVEVERRSLQTTSDQQNIKVPGNLTSVLLSNLVPREQYTVRARVNTKAQGEWSEELRAWTLSDILPPQPENIKISNITDSTAMVSWTIVDGYSISSIIIRYKVQGKNEDQHIDVKIKNATVTQYQLKGLEPETTYHVDIFAENNIGSSNPAFSHELRTLPHSPASADLGGGKMLLIAILGSAGMTCITVLLAFLIMLQLKRANVQRRMAQAFQNREEPAVQFNSGTLALNRKAKNNPDPTIYPVLDWNDIKFQDVIGEGNFGQVLKARIKKDGLRMDAAIKRMKEYASKDDHRDFAGELEVLCKLGHHPNIINLLGACEHRGYLYLAIEYAPHGNLLDFLRKSRVLETDPAFAIANSTASTLSSQQLLHFAADVARGMDYLSQKQFIHRDLAARNILVGENYIAKIADFGLSRGQEVYVKKTMGRLPVRWMAIESLNYSVYTTNSDVWSYGVLLWEIVSLGGTPYCGMTCAELYEKLPQGYRLEKPLNCDDEVYDLMRQCWREKPYERPSFAQILVSLNRMLEERKTYVNTTLYEKFTYAGIDCSAEEAA</sequence>
<proteinExistence type="evidence at protein level"/>
<protein>
    <recommendedName>
        <fullName>Angiopoietin-1 receptor</fullName>
        <ecNumber>2.7.10.1</ecNumber>
    </recommendedName>
    <alternativeName>
        <fullName>Endothelial tyrosine kinase</fullName>
    </alternativeName>
    <alternativeName>
        <fullName>HYK</fullName>
    </alternativeName>
    <alternativeName>
        <fullName>STK1</fullName>
    </alternativeName>
    <alternativeName>
        <fullName>Tunica interna endothelial cell kinase</fullName>
    </alternativeName>
    <alternativeName>
        <fullName>Tyrosine kinase with Ig and EGF homology domains-2</fullName>
    </alternativeName>
    <alternativeName>
        <fullName>Tyrosine-protein kinase receptor TEK</fullName>
    </alternativeName>
    <alternativeName>
        <fullName>Tyrosine-protein kinase receptor TIE-2</fullName>
        <shortName>mTIE2</shortName>
    </alternativeName>
    <alternativeName>
        <fullName>p140 TEK</fullName>
    </alternativeName>
    <cdAntigenName>CD202b</cdAntigenName>
</protein>
<dbReference type="EC" id="2.7.10.1"/>
<dbReference type="EMBL" id="X71426">
    <property type="protein sequence ID" value="CAA50557.1"/>
    <property type="molecule type" value="mRNA"/>
</dbReference>
<dbReference type="EMBL" id="X67553">
    <property type="protein sequence ID" value="CAA47857.1"/>
    <property type="molecule type" value="mRNA"/>
</dbReference>
<dbReference type="EMBL" id="D13738">
    <property type="protein sequence ID" value="BAA02883.1"/>
    <property type="molecule type" value="mRNA"/>
</dbReference>
<dbReference type="EMBL" id="S67051">
    <property type="protein sequence ID" value="AAB28663.1"/>
    <property type="molecule type" value="mRNA"/>
</dbReference>
<dbReference type="CCDS" id="CCDS71421.1"/>
<dbReference type="PIR" id="I54237">
    <property type="entry name" value="I54237"/>
</dbReference>
<dbReference type="PIR" id="JH0771">
    <property type="entry name" value="JH0771"/>
</dbReference>
<dbReference type="PIR" id="JN0712">
    <property type="entry name" value="JN0712"/>
</dbReference>
<dbReference type="RefSeq" id="NP_001277478.1">
    <property type="nucleotide sequence ID" value="NM_001290549.1"/>
</dbReference>
<dbReference type="SMR" id="Q02858"/>
<dbReference type="BioGRID" id="204107">
    <property type="interactions" value="5"/>
</dbReference>
<dbReference type="CORUM" id="Q02858"/>
<dbReference type="FunCoup" id="Q02858">
    <property type="interactions" value="797"/>
</dbReference>
<dbReference type="IntAct" id="Q02858">
    <property type="interactions" value="6"/>
</dbReference>
<dbReference type="MINT" id="Q02858"/>
<dbReference type="STRING" id="10090.ENSMUSP00000099862"/>
<dbReference type="BindingDB" id="Q02858"/>
<dbReference type="ChEMBL" id="CHEMBL5199"/>
<dbReference type="DrugCentral" id="Q02858"/>
<dbReference type="GlyConnect" id="2128">
    <property type="glycosylation" value="1 N-Linked glycan (1 site)"/>
</dbReference>
<dbReference type="GlyCosmos" id="Q02858">
    <property type="glycosylation" value="9 sites, 1 glycan"/>
</dbReference>
<dbReference type="GlyGen" id="Q02858">
    <property type="glycosylation" value="9 sites, 4 N-linked glycans (4 sites)"/>
</dbReference>
<dbReference type="iPTMnet" id="Q02858"/>
<dbReference type="PhosphoSitePlus" id="Q02858"/>
<dbReference type="CPTAC" id="non-CPTAC-3433"/>
<dbReference type="PaxDb" id="10090-ENSMUSP00000099862"/>
<dbReference type="ProteomicsDB" id="259026"/>
<dbReference type="Antibodypedia" id="2050">
    <property type="antibodies" value="1421 antibodies from 44 providers"/>
</dbReference>
<dbReference type="DNASU" id="21687"/>
<dbReference type="Ensembl" id="ENSMUST00000071168.6">
    <property type="protein sequence ID" value="ENSMUSP00000071162.6"/>
    <property type="gene ID" value="ENSMUSG00000006386.16"/>
</dbReference>
<dbReference type="GeneID" id="21687"/>
<dbReference type="KEGG" id="mmu:21687"/>
<dbReference type="UCSC" id="uc008tsk.2">
    <property type="organism name" value="mouse"/>
</dbReference>
<dbReference type="AGR" id="MGI:98664"/>
<dbReference type="CTD" id="7010"/>
<dbReference type="MGI" id="MGI:98664">
    <property type="gene designation" value="Tek"/>
</dbReference>
<dbReference type="VEuPathDB" id="HostDB:ENSMUSG00000006386"/>
<dbReference type="eggNOG" id="KOG0200">
    <property type="taxonomic scope" value="Eukaryota"/>
</dbReference>
<dbReference type="GeneTree" id="ENSGT00940000158840"/>
<dbReference type="InParanoid" id="Q02858"/>
<dbReference type="OrthoDB" id="1668230at2759"/>
<dbReference type="BRENDA" id="2.7.10.1">
    <property type="organism ID" value="3474"/>
</dbReference>
<dbReference type="Reactome" id="R-MMU-210993">
    <property type="pathway name" value="Tie2 Signaling"/>
</dbReference>
<dbReference type="Reactome" id="R-MMU-5673001">
    <property type="pathway name" value="RAF/MAP kinase cascade"/>
</dbReference>
<dbReference type="BioGRID-ORCS" id="21687">
    <property type="hits" value="1 hit in 78 CRISPR screens"/>
</dbReference>
<dbReference type="PRO" id="PR:Q02858"/>
<dbReference type="Proteomes" id="UP000000589">
    <property type="component" value="Chromosome 4"/>
</dbReference>
<dbReference type="RNAct" id="Q02858">
    <property type="molecule type" value="protein"/>
</dbReference>
<dbReference type="Bgee" id="ENSMUSG00000006386">
    <property type="expression patterns" value="Expressed in vasculature of brain and 293 other cell types or tissues"/>
</dbReference>
<dbReference type="ExpressionAtlas" id="Q02858">
    <property type="expression patterns" value="baseline and differential"/>
</dbReference>
<dbReference type="GO" id="GO:0005856">
    <property type="term" value="C:cytoskeleton"/>
    <property type="evidence" value="ECO:0007669"/>
    <property type="project" value="UniProtKB-SubCell"/>
</dbReference>
<dbReference type="GO" id="GO:0005576">
    <property type="term" value="C:extracellular region"/>
    <property type="evidence" value="ECO:0007669"/>
    <property type="project" value="UniProtKB-SubCell"/>
</dbReference>
<dbReference type="GO" id="GO:0005925">
    <property type="term" value="C:focal adhesion"/>
    <property type="evidence" value="ECO:0007669"/>
    <property type="project" value="UniProtKB-SubCell"/>
</dbReference>
<dbReference type="GO" id="GO:0016020">
    <property type="term" value="C:membrane"/>
    <property type="evidence" value="ECO:0000255"/>
    <property type="project" value="MGI"/>
</dbReference>
<dbReference type="GO" id="GO:0048471">
    <property type="term" value="C:perinuclear region of cytoplasm"/>
    <property type="evidence" value="ECO:0000314"/>
    <property type="project" value="MGI"/>
</dbReference>
<dbReference type="GO" id="GO:0005886">
    <property type="term" value="C:plasma membrane"/>
    <property type="evidence" value="ECO:0000304"/>
    <property type="project" value="Reactome"/>
</dbReference>
<dbReference type="GO" id="GO:0005524">
    <property type="term" value="F:ATP binding"/>
    <property type="evidence" value="ECO:0007669"/>
    <property type="project" value="UniProtKB-KW"/>
</dbReference>
<dbReference type="GO" id="GO:0004713">
    <property type="term" value="F:protein tyrosine kinase activity"/>
    <property type="evidence" value="ECO:0000314"/>
    <property type="project" value="UniProtKB"/>
</dbReference>
<dbReference type="GO" id="GO:0038023">
    <property type="term" value="F:signaling receptor activity"/>
    <property type="evidence" value="ECO:0000353"/>
    <property type="project" value="MGI"/>
</dbReference>
<dbReference type="GO" id="GO:0004714">
    <property type="term" value="F:transmembrane receptor protein tyrosine kinase activity"/>
    <property type="evidence" value="ECO:0007669"/>
    <property type="project" value="UniProtKB-EC"/>
</dbReference>
<dbReference type="GO" id="GO:0001525">
    <property type="term" value="P:angiogenesis"/>
    <property type="evidence" value="ECO:0000315"/>
    <property type="project" value="UniProtKB"/>
</dbReference>
<dbReference type="GO" id="GO:0001569">
    <property type="term" value="P:branching involved in blood vessel morphogenesis"/>
    <property type="evidence" value="ECO:0000304"/>
    <property type="project" value="DFLAT"/>
</dbReference>
<dbReference type="GO" id="GO:0007169">
    <property type="term" value="P:cell surface receptor protein tyrosine kinase signaling pathway"/>
    <property type="evidence" value="ECO:0000250"/>
    <property type="project" value="UniProtKB"/>
</dbReference>
<dbReference type="GO" id="GO:0098609">
    <property type="term" value="P:cell-cell adhesion"/>
    <property type="evidence" value="ECO:0000315"/>
    <property type="project" value="MGI"/>
</dbReference>
<dbReference type="GO" id="GO:0007160">
    <property type="term" value="P:cell-matrix adhesion"/>
    <property type="evidence" value="ECO:0000315"/>
    <property type="project" value="MGI"/>
</dbReference>
<dbReference type="GO" id="GO:0001935">
    <property type="term" value="P:endothelial cell proliferation"/>
    <property type="evidence" value="ECO:0000315"/>
    <property type="project" value="UniProtKB"/>
</dbReference>
<dbReference type="GO" id="GO:0007507">
    <property type="term" value="P:heart development"/>
    <property type="evidence" value="ECO:0000315"/>
    <property type="project" value="UniProtKB"/>
</dbReference>
<dbReference type="GO" id="GO:0060347">
    <property type="term" value="P:heart trabecula formation"/>
    <property type="evidence" value="ECO:0000315"/>
    <property type="project" value="UniProtKB"/>
</dbReference>
<dbReference type="GO" id="GO:0030097">
    <property type="term" value="P:hemopoiesis"/>
    <property type="evidence" value="ECO:0000315"/>
    <property type="project" value="MGI"/>
</dbReference>
<dbReference type="GO" id="GO:0016525">
    <property type="term" value="P:negative regulation of angiogenesis"/>
    <property type="evidence" value="ECO:0000250"/>
    <property type="project" value="UniProtKB"/>
</dbReference>
<dbReference type="GO" id="GO:0043066">
    <property type="term" value="P:negative regulation of apoptotic process"/>
    <property type="evidence" value="ECO:0000316"/>
    <property type="project" value="MGI"/>
</dbReference>
<dbReference type="GO" id="GO:2000352">
    <property type="term" value="P:negative regulation of endothelial cell apoptotic process"/>
    <property type="evidence" value="ECO:0000315"/>
    <property type="project" value="UniProtKB"/>
</dbReference>
<dbReference type="GO" id="GO:0018108">
    <property type="term" value="P:peptidyl-tyrosine phosphorylation"/>
    <property type="evidence" value="ECO:0000314"/>
    <property type="project" value="UniProtKB"/>
</dbReference>
<dbReference type="GO" id="GO:0045766">
    <property type="term" value="P:positive regulation of angiogenesis"/>
    <property type="evidence" value="ECO:0000250"/>
    <property type="project" value="UniProtKB"/>
</dbReference>
<dbReference type="GO" id="GO:0045785">
    <property type="term" value="P:positive regulation of cell adhesion"/>
    <property type="evidence" value="ECO:0000315"/>
    <property type="project" value="MGI"/>
</dbReference>
<dbReference type="GO" id="GO:0002720">
    <property type="term" value="P:positive regulation of cytokine production involved in immune response"/>
    <property type="evidence" value="ECO:0000314"/>
    <property type="project" value="MGI"/>
</dbReference>
<dbReference type="GO" id="GO:0010595">
    <property type="term" value="P:positive regulation of endothelial cell migration"/>
    <property type="evidence" value="ECO:0000250"/>
    <property type="project" value="UniProtKB"/>
</dbReference>
<dbReference type="GO" id="GO:0070374">
    <property type="term" value="P:positive regulation of ERK1 and ERK2 cascade"/>
    <property type="evidence" value="ECO:0000250"/>
    <property type="project" value="UniProtKB"/>
</dbReference>
<dbReference type="GO" id="GO:0051894">
    <property type="term" value="P:positive regulation of focal adhesion assembly"/>
    <property type="evidence" value="ECO:0000250"/>
    <property type="project" value="UniProtKB"/>
</dbReference>
<dbReference type="GO" id="GO:1902533">
    <property type="term" value="P:positive regulation of intracellular signal transduction"/>
    <property type="evidence" value="ECO:0000250"/>
    <property type="project" value="UniProtKB"/>
</dbReference>
<dbReference type="GO" id="GO:0051897">
    <property type="term" value="P:positive regulation of phosphatidylinositol 3-kinase/protein kinase B signal transduction"/>
    <property type="evidence" value="ECO:0000250"/>
    <property type="project" value="UniProtKB"/>
</dbReference>
<dbReference type="GO" id="GO:0042307">
    <property type="term" value="P:positive regulation of protein import into nucleus"/>
    <property type="evidence" value="ECO:0000314"/>
    <property type="project" value="MGI"/>
</dbReference>
<dbReference type="GO" id="GO:0030949">
    <property type="term" value="P:positive regulation of vascular endothelial growth factor receptor signaling pathway"/>
    <property type="evidence" value="ECO:0000304"/>
    <property type="project" value="DFLAT"/>
</dbReference>
<dbReference type="GO" id="GO:0045765">
    <property type="term" value="P:regulation of angiogenesis"/>
    <property type="evidence" value="ECO:0000315"/>
    <property type="project" value="MGI"/>
</dbReference>
<dbReference type="GO" id="GO:0030334">
    <property type="term" value="P:regulation of cell migration"/>
    <property type="evidence" value="ECO:0000314"/>
    <property type="project" value="MGI"/>
</dbReference>
<dbReference type="GO" id="GO:0001936">
    <property type="term" value="P:regulation of endothelial cell proliferation"/>
    <property type="evidence" value="ECO:0000304"/>
    <property type="project" value="DFLAT"/>
</dbReference>
<dbReference type="GO" id="GO:0032878">
    <property type="term" value="P:regulation of establishment or maintenance of cell polarity"/>
    <property type="evidence" value="ECO:0000250"/>
    <property type="project" value="UniProtKB"/>
</dbReference>
<dbReference type="GO" id="GO:1901222">
    <property type="term" value="P:regulation of non-canonical NF-kappaB signal transduction"/>
    <property type="evidence" value="ECO:0000316"/>
    <property type="project" value="MGI"/>
</dbReference>
<dbReference type="GO" id="GO:0032526">
    <property type="term" value="P:response to retinoic acid"/>
    <property type="evidence" value="ECO:0000314"/>
    <property type="project" value="BHF-UCL"/>
</dbReference>
<dbReference type="GO" id="GO:0002040">
    <property type="term" value="P:sprouting angiogenesis"/>
    <property type="evidence" value="ECO:0000250"/>
    <property type="project" value="UniProtKB"/>
</dbReference>
<dbReference type="GO" id="GO:0034446">
    <property type="term" value="P:substrate adhesion-dependent cell spreading"/>
    <property type="evidence" value="ECO:0000250"/>
    <property type="project" value="UniProtKB"/>
</dbReference>
<dbReference type="GO" id="GO:0048014">
    <property type="term" value="P:Tie signaling pathway"/>
    <property type="evidence" value="ECO:0000250"/>
    <property type="project" value="UniProtKB"/>
</dbReference>
<dbReference type="GO" id="GO:0001570">
    <property type="term" value="P:vasculogenesis"/>
    <property type="evidence" value="ECO:0000315"/>
    <property type="project" value="UniProtKB"/>
</dbReference>
<dbReference type="CDD" id="cd00055">
    <property type="entry name" value="EGF_Lam"/>
    <property type="match status" value="1"/>
</dbReference>
<dbReference type="CDD" id="cd00063">
    <property type="entry name" value="FN3"/>
    <property type="match status" value="2"/>
</dbReference>
<dbReference type="CDD" id="cd20964">
    <property type="entry name" value="IgI_Tie2"/>
    <property type="match status" value="1"/>
</dbReference>
<dbReference type="CDD" id="cd05088">
    <property type="entry name" value="PTKc_Tie2"/>
    <property type="match status" value="1"/>
</dbReference>
<dbReference type="FunFam" id="2.60.40.10:FF:000397">
    <property type="entry name" value="angiopoietin-1 receptor isoform X1"/>
    <property type="match status" value="1"/>
</dbReference>
<dbReference type="FunFam" id="2.60.40.10:FF:000407">
    <property type="entry name" value="angiopoietin-1 receptor isoform X1"/>
    <property type="match status" value="1"/>
</dbReference>
<dbReference type="FunFam" id="2.60.40.10:FF:000406">
    <property type="entry name" value="angiopoietin-1 receptor isoform X2"/>
    <property type="match status" value="1"/>
</dbReference>
<dbReference type="FunFam" id="3.30.200.20:FF:000113">
    <property type="entry name" value="Putative tyrosine-protein kinase receptor Tie-1"/>
    <property type="match status" value="1"/>
</dbReference>
<dbReference type="FunFam" id="2.60.40.10:FF:000388">
    <property type="entry name" value="TEK receptor tyrosine kinase"/>
    <property type="match status" value="1"/>
</dbReference>
<dbReference type="FunFam" id="2.60.40.10:FF:000391">
    <property type="entry name" value="TEK receptor tyrosine kinase"/>
    <property type="match status" value="1"/>
</dbReference>
<dbReference type="FunFam" id="2.60.40.10:FF:000441">
    <property type="entry name" value="TEK receptor tyrosine kinase"/>
    <property type="match status" value="1"/>
</dbReference>
<dbReference type="FunFam" id="1.10.510.10:FF:000123">
    <property type="entry name" value="Tyrosine-protein kinase receptor Tie-1"/>
    <property type="match status" value="1"/>
</dbReference>
<dbReference type="FunFam" id="2.170.300.10:FF:000003">
    <property type="entry name" value="tyrosine-protein kinase receptor Tie-1 isoform X1"/>
    <property type="match status" value="1"/>
</dbReference>
<dbReference type="Gene3D" id="2.60.40.10">
    <property type="entry name" value="Immunoglobulins"/>
    <property type="match status" value="6"/>
</dbReference>
<dbReference type="Gene3D" id="3.30.200.20">
    <property type="entry name" value="Phosphorylase Kinase, domain 1"/>
    <property type="match status" value="1"/>
</dbReference>
<dbReference type="Gene3D" id="2.170.300.10">
    <property type="entry name" value="Tie2 ligand-binding domain superfamily"/>
    <property type="match status" value="1"/>
</dbReference>
<dbReference type="Gene3D" id="1.10.510.10">
    <property type="entry name" value="Transferase(Phosphotransferase) domain 1"/>
    <property type="match status" value="1"/>
</dbReference>
<dbReference type="InterPro" id="IPR000742">
    <property type="entry name" value="EGF-like_dom"/>
</dbReference>
<dbReference type="InterPro" id="IPR003961">
    <property type="entry name" value="FN3_dom"/>
</dbReference>
<dbReference type="InterPro" id="IPR036116">
    <property type="entry name" value="FN3_sf"/>
</dbReference>
<dbReference type="InterPro" id="IPR007110">
    <property type="entry name" value="Ig-like_dom"/>
</dbReference>
<dbReference type="InterPro" id="IPR036179">
    <property type="entry name" value="Ig-like_dom_sf"/>
</dbReference>
<dbReference type="InterPro" id="IPR013783">
    <property type="entry name" value="Ig-like_fold"/>
</dbReference>
<dbReference type="InterPro" id="IPR011009">
    <property type="entry name" value="Kinase-like_dom_sf"/>
</dbReference>
<dbReference type="InterPro" id="IPR002049">
    <property type="entry name" value="LE_dom"/>
</dbReference>
<dbReference type="InterPro" id="IPR000719">
    <property type="entry name" value="Prot_kinase_dom"/>
</dbReference>
<dbReference type="InterPro" id="IPR017441">
    <property type="entry name" value="Protein_kinase_ATP_BS"/>
</dbReference>
<dbReference type="InterPro" id="IPR050122">
    <property type="entry name" value="RTK"/>
</dbReference>
<dbReference type="InterPro" id="IPR001245">
    <property type="entry name" value="Ser-Thr/Tyr_kinase_cat_dom"/>
</dbReference>
<dbReference type="InterPro" id="IPR018941">
    <property type="entry name" value="Tyr_kin_Tie2_Ig-like_dom-1_N"/>
</dbReference>
<dbReference type="InterPro" id="IPR008266">
    <property type="entry name" value="Tyr_kinase_AS"/>
</dbReference>
<dbReference type="InterPro" id="IPR020635">
    <property type="entry name" value="Tyr_kinase_cat_dom"/>
</dbReference>
<dbReference type="PANTHER" id="PTHR24416:SF125">
    <property type="entry name" value="ANGIOPOIETIN-1 RECEPTOR"/>
    <property type="match status" value="1"/>
</dbReference>
<dbReference type="PANTHER" id="PTHR24416">
    <property type="entry name" value="TYROSINE-PROTEIN KINASE RECEPTOR"/>
    <property type="match status" value="1"/>
</dbReference>
<dbReference type="Pfam" id="PF00041">
    <property type="entry name" value="fn3"/>
    <property type="match status" value="2"/>
</dbReference>
<dbReference type="Pfam" id="PF10430">
    <property type="entry name" value="Ig_Tie2_1"/>
    <property type="match status" value="1"/>
</dbReference>
<dbReference type="Pfam" id="PF07714">
    <property type="entry name" value="PK_Tyr_Ser-Thr"/>
    <property type="match status" value="1"/>
</dbReference>
<dbReference type="PIRSF" id="PIRSF000615">
    <property type="entry name" value="TyrPK_CSF1-R"/>
    <property type="match status" value="1"/>
</dbReference>
<dbReference type="PRINTS" id="PR00109">
    <property type="entry name" value="TYRKINASE"/>
</dbReference>
<dbReference type="SMART" id="SM00181">
    <property type="entry name" value="EGF"/>
    <property type="match status" value="2"/>
</dbReference>
<dbReference type="SMART" id="SM00060">
    <property type="entry name" value="FN3"/>
    <property type="match status" value="3"/>
</dbReference>
<dbReference type="SMART" id="SM00220">
    <property type="entry name" value="S_TKc"/>
    <property type="match status" value="1"/>
</dbReference>
<dbReference type="SMART" id="SM00219">
    <property type="entry name" value="TyrKc"/>
    <property type="match status" value="1"/>
</dbReference>
<dbReference type="SUPFAM" id="SSF49265">
    <property type="entry name" value="Fibronectin type III"/>
    <property type="match status" value="2"/>
</dbReference>
<dbReference type="SUPFAM" id="SSF48726">
    <property type="entry name" value="Immunoglobulin"/>
    <property type="match status" value="1"/>
</dbReference>
<dbReference type="SUPFAM" id="SSF56112">
    <property type="entry name" value="Protein kinase-like (PK-like)"/>
    <property type="match status" value="1"/>
</dbReference>
<dbReference type="PROSITE" id="PS00022">
    <property type="entry name" value="EGF_1"/>
    <property type="match status" value="3"/>
</dbReference>
<dbReference type="PROSITE" id="PS01186">
    <property type="entry name" value="EGF_2"/>
    <property type="match status" value="3"/>
</dbReference>
<dbReference type="PROSITE" id="PS50026">
    <property type="entry name" value="EGF_3"/>
    <property type="match status" value="1"/>
</dbReference>
<dbReference type="PROSITE" id="PS50853">
    <property type="entry name" value="FN3"/>
    <property type="match status" value="3"/>
</dbReference>
<dbReference type="PROSITE" id="PS50835">
    <property type="entry name" value="IG_LIKE"/>
    <property type="match status" value="1"/>
</dbReference>
<dbReference type="PROSITE" id="PS00107">
    <property type="entry name" value="PROTEIN_KINASE_ATP"/>
    <property type="match status" value="1"/>
</dbReference>
<dbReference type="PROSITE" id="PS50011">
    <property type="entry name" value="PROTEIN_KINASE_DOM"/>
    <property type="match status" value="1"/>
</dbReference>
<dbReference type="PROSITE" id="PS00109">
    <property type="entry name" value="PROTEIN_KINASE_TYR"/>
    <property type="match status" value="1"/>
</dbReference>
<gene>
    <name type="primary">Tek</name>
    <name type="synonym">Hyk</name>
    <name type="synonym">Tie-2</name>
    <name type="synonym">Tie2</name>
</gene>
<reference key="1">
    <citation type="journal article" date="1993" name="Proc. Natl. Acad. Sci. U.S.A.">
        <title>Tie-1 and tie-2 define another class of putative receptor tyrosine kinase genes expressed in early embryonic vascular system.</title>
        <authorList>
            <person name="Sato T.N."/>
            <person name="Qin Y."/>
            <person name="Kozak C.A."/>
            <person name="Andus K.L."/>
        </authorList>
    </citation>
    <scope>NUCLEOTIDE SEQUENCE [MRNA]</scope>
    <scope>DEVELOPMENTAL STAGE</scope>
    <source>
        <strain>BALB/cJ</strain>
        <tissue>Lung</tissue>
    </source>
</reference>
<reference key="2">
    <citation type="journal article" date="1993" name="Oncogene">
        <title>The endothelial-specific receptor tyrosine kinase, tek, is a member of a new subfamily of receptors.</title>
        <authorList>
            <person name="Dumont D.J."/>
            <person name="Gradwol G.J."/>
            <person name="Fong G.-H."/>
            <person name="Auerbach R."/>
            <person name="Breitman M.L."/>
        </authorList>
    </citation>
    <scope>NUCLEOTIDE SEQUENCE [MRNA]</scope>
    <source>
        <strain>CD-1</strain>
        <tissue>Embryonic heart</tissue>
    </source>
</reference>
<reference key="3">
    <citation type="journal article" date="1992" name="Biochem. Biophys. Res. Commun.">
        <title>A novel tyrosine kinase, hyk, expressed in murine embryonic stem cells.</title>
        <authorList>
            <person name="Horita K."/>
            <person name="Yagi T."/>
            <person name="Kohmura N."/>
            <person name="Tomooka Y."/>
            <person name="Ikawa Y."/>
            <person name="Aizawa S."/>
        </authorList>
    </citation>
    <scope>NUCLEOTIDE SEQUENCE [MRNA]</scope>
    <source>
        <tissue>Embryonic stem cell</tissue>
    </source>
</reference>
<reference key="4">
    <citation type="journal article" date="1993" name="Growth Factors">
        <title>Tie2, a putative protein tyrosine kinase from a new class of cell surface receptor.</title>
        <authorList>
            <person name="Runting A.S."/>
            <person name="Stacker S.A."/>
            <person name="Wilks A.F."/>
        </authorList>
    </citation>
    <scope>NUCLEOTIDE SEQUENCE [MRNA]</scope>
    <source>
        <tissue>Lung</tissue>
    </source>
</reference>
<reference key="5">
    <citation type="journal article" date="1993" name="Development">
        <title>Expression of tie-2, a member of a novel family of receptor tyrosine kinases, in the endothelial cell lineage.</title>
        <authorList>
            <person name="Schnuerch H."/>
            <person name="Risau W."/>
        </authorList>
    </citation>
    <scope>NUCLEOTIDE SEQUENCE [MRNA]</scope>
</reference>
<reference key="6">
    <citation type="journal article" date="1993" name="Biochem. Biophys. Res. Commun.">
        <title>Molecular cloning and characterization of mouse TIE and TEK receptor tyrosine kinase genes and their expression in hematopoietic stem cells.</title>
        <authorList>
            <person name="Iwama A."/>
            <person name="Hamaguchi I."/>
            <person name="Hashiyama M."/>
            <person name="Murayama Y."/>
            <person name="Yasunaga K."/>
            <person name="Suda T."/>
        </authorList>
    </citation>
    <scope>NUCLEOTIDE SEQUENCE [MRNA]</scope>
    <scope>TISSUE SPECIFICITY</scope>
    <source>
        <tissue>Hematopoietic stem cell</tissue>
    </source>
</reference>
<reference key="7">
    <citation type="journal article" date="1992" name="Oncogene">
        <title>Tek, a novel tyrosine kinase gene located on mouse chromosome 4, is expressed in endothelial cells and their presumptive precursors.</title>
        <authorList>
            <person name="Dumont D.J."/>
            <person name="Yamaguchi T.P."/>
            <person name="Conlon R.A."/>
            <person name="Rossant J."/>
            <person name="Breitman M.L."/>
        </authorList>
    </citation>
    <scope>NUCLEOTIDE SEQUENCE [MRNA] OF 822-1122</scope>
    <source>
        <strain>CD-1</strain>
        <tissue>Embryonic heart</tissue>
    </source>
</reference>
<reference key="8">
    <citation type="journal article" date="1994" name="Genes Dev.">
        <title>Dominant-negative and targeted null mutations in the endothelial receptor tyrosine kinase, tek, reveal a critical role in vasculogenesis of the embryo.</title>
        <authorList>
            <person name="Dumont D.J."/>
            <person name="Gradwohl G."/>
            <person name="Fong G.H."/>
            <person name="Puri M.C."/>
            <person name="Gertsenstein M."/>
            <person name="Auerbach A."/>
            <person name="Breitman M.L."/>
        </authorList>
    </citation>
    <scope>DISRUPTION PHENOTYPE</scope>
    <scope>MUTAGENESIS OF LYS-853</scope>
    <scope>CATALYTIC ACTIVITY</scope>
    <scope>FUNCTION</scope>
</reference>
<reference key="9">
    <citation type="journal article" date="1995" name="Nature">
        <title>Distinct roles of the receptor tyrosine kinases Tie-1 and Tie-2 in blood vessel formation.</title>
        <authorList>
            <person name="Sato T.N."/>
            <person name="Tozawa Y."/>
            <person name="Deutsch U."/>
            <person name="Wolburg-Buchholz K."/>
            <person name="Fujiwara Y."/>
            <person name="Gendron-Maguire M."/>
            <person name="Gridley T."/>
            <person name="Wolburg H."/>
            <person name="Risau W."/>
            <person name="Qin Y."/>
        </authorList>
    </citation>
    <scope>DISRUPTION PHENOTYPE</scope>
    <scope>FUNCTION</scope>
</reference>
<reference key="10">
    <citation type="journal article" date="1998" name="Mol. Cell. Biol.">
        <title>Tyrosine 1101 of Tie2 is the major site of association of p85 and is required for activation of phosphatidylinositol 3-kinase and Akt.</title>
        <authorList>
            <person name="Kontos C.D."/>
            <person name="Stauffer T.P."/>
            <person name="Yang W.P."/>
            <person name="York J.D."/>
            <person name="Huang L."/>
            <person name="Blanar M.A."/>
            <person name="Meyer T."/>
            <person name="Peters K.G."/>
        </authorList>
    </citation>
    <scope>INTERACTION WITH PIK3R1</scope>
    <scope>MUTAGENESIS OF TYR-1100</scope>
    <scope>FUNCTION IN ACTIVATION OF PHOSPHATIDYLINOSITOL 3-KINASE AND AKT1</scope>
</reference>
<reference key="11">
    <citation type="journal article" date="1999" name="J. Biol. Chem.">
        <title>Identification of Tek/Tie2 binding partners. Binding to a multifunctional docking site mediates cell survival and migration.</title>
        <authorList>
            <person name="Jones N."/>
            <person name="Master Z."/>
            <person name="Jones J."/>
            <person name="Bouchard D."/>
            <person name="Gunji Y."/>
            <person name="Sasaki H."/>
            <person name="Daly R."/>
            <person name="Alitalo K."/>
            <person name="Dumont D.J."/>
        </authorList>
    </citation>
    <scope>INTERACTION WITH GRB2; GRB7</scope>
    <scope>GRB14</scope>
    <scope>PTPN11/SHP2 AND PIK3R1</scope>
    <scope>FUNCTION IN PHOSPHORYLATION OF GRB7 AND PIK3R1</scope>
    <scope>MUTAGENESIS OF TYR-1100</scope>
</reference>
<reference key="12">
    <citation type="journal article" date="1999" name="Oncogene">
        <title>Functional interaction of vascular endothelial-protein-tyrosine phosphatase with the angiopoietin receptor Tie-2.</title>
        <authorList>
            <person name="Fachinger G."/>
            <person name="Deutsch U."/>
            <person name="Risau W."/>
        </authorList>
    </citation>
    <scope>PHOSPHORYLATION</scope>
    <scope>DEPHOSPHORYLATION BY PTPRB</scope>
</reference>
<reference key="13">
    <citation type="journal article" date="2001" name="EMBO Rep.">
        <title>Rescue of the early vascular defects in Tek/Tie2 null mice reveals an essential survival function.</title>
        <authorList>
            <person name="Jones N."/>
            <person name="Voskas D."/>
            <person name="Master Z."/>
            <person name="Sarao R."/>
            <person name="Jones J."/>
            <person name="Dumont D.J."/>
        </authorList>
    </citation>
    <scope>ANTI-APOPTOTIC FUNCTION</scope>
</reference>
<reference key="14">
    <citation type="journal article" date="2003" name="J. Biol. Chem.">
        <title>Angiopoietin-1 and angiopoietin-2 share the same binding domains in the Tie-2 receptor involving the first Ig-like loop and the epidermal growth factor-like repeats.</title>
        <authorList>
            <person name="Fiedler U."/>
            <person name="Krissl T."/>
            <person name="Koidl S."/>
            <person name="Weiss C."/>
            <person name="Koblizek T."/>
            <person name="Deutsch U."/>
            <person name="Martiny-Baron G."/>
            <person name="Marme D."/>
            <person name="Augustin H.G."/>
        </authorList>
    </citation>
    <scope>INTERACTION WITH ANGPT1 AND ANGPT2</scope>
    <scope>DOMAIN</scope>
</reference>
<reference key="15">
    <citation type="journal article" date="2003" name="Mol. Cell. Biol.">
        <title>A unique autophosphorylation site on Tie2/Tek mediates Dok-R phosphotyrosine binding domain binding and function.</title>
        <authorList>
            <person name="Jones N."/>
            <person name="Chen S.H."/>
            <person name="Sturk C."/>
            <person name="Master Z."/>
            <person name="Tran J."/>
            <person name="Kerbel R.S."/>
            <person name="Dumont D.J."/>
        </authorList>
    </citation>
    <scope>PHOSPHORYLATION AT TYR-1100 AND TYR-1106</scope>
    <scope>MUTAGENESIS OF LYS-853; TYR-1100 AND TYR-1106</scope>
    <scope>FUNCTION IN DOK2 PHOSPHORYLATION</scope>
    <scope>INTERACTION WITH DOK2</scope>
</reference>
<reference key="16">
    <citation type="journal article" date="2004" name="FASEB J.">
        <title>Biological characterization of angiopoietin-3 and angiopoietin-4.</title>
        <authorList>
            <person name="Lee H.J."/>
            <person name="Cho C.H."/>
            <person name="Hwang S.J."/>
            <person name="Choi H.H."/>
            <person name="Kim K.T."/>
            <person name="Ahn S.Y."/>
            <person name="Kim J.H."/>
            <person name="Oh J.L."/>
            <person name="Lee G.M."/>
            <person name="Koh G.Y."/>
        </authorList>
    </citation>
    <scope>FUNCTION AS ANGPT4 RECEPTOR AND IN ACTIVATION OF AKT1</scope>
    <scope>INTERACTION WITH ANGPT4</scope>
    <scope>AUTOPHOSPHORYLATION</scope>
</reference>
<reference key="17">
    <citation type="journal article" date="2009" name="J. Cell Biol.">
        <title>VE-PTP controls blood vessel development by balancing Tie-2 activity.</title>
        <authorList>
            <person name="Winderlich M."/>
            <person name="Keller L."/>
            <person name="Cagna G."/>
            <person name="Broermann A."/>
            <person name="Kamenyeva O."/>
            <person name="Kiefer F."/>
            <person name="Deutsch U."/>
            <person name="Nottebaum A.F."/>
            <person name="Vestweber D."/>
        </authorList>
    </citation>
    <scope>INTERACTION WITH PTPRB</scope>
</reference>
<reference key="18">
    <citation type="journal article" date="2010" name="Cell">
        <title>A tissue-specific atlas of mouse protein phosphorylation and expression.</title>
        <authorList>
            <person name="Huttlin E.L."/>
            <person name="Jedrychowski M.P."/>
            <person name="Elias J.E."/>
            <person name="Goswami T."/>
            <person name="Rad R."/>
            <person name="Beausoleil S.A."/>
            <person name="Villen J."/>
            <person name="Haas W."/>
            <person name="Sowa M.E."/>
            <person name="Gygi S.P."/>
        </authorList>
    </citation>
    <scope>IDENTIFICATION BY MASS SPECTROMETRY [LARGE SCALE ANALYSIS]</scope>
    <source>
        <tissue>Brown adipose tissue</tissue>
        <tissue>Heart</tissue>
        <tissue>Kidney</tissue>
        <tissue>Lung</tissue>
        <tissue>Pancreas</tissue>
        <tissue>Spleen</tissue>
    </source>
</reference>
<reference key="19">
    <citation type="journal article" date="2010" name="Cell Commun. Signal.">
        <title>Tyrosine phosphorylation of Grb14 by Tie2.</title>
        <authorList>
            <person name="Sturk C."/>
            <person name="Dumont D.J."/>
        </authorList>
    </citation>
    <scope>INTERACTION WITH GRB14</scope>
    <scope>FUNCTION IN GRB14 PHOSPHORYLATION</scope>
</reference>
<reference key="20">
    <citation type="journal article" date="2016" name="J. Clin. Invest.">
        <title>Angiopoietin receptor TEK mutations underlie primary congenital glaucoma with variable expressivity.</title>
        <authorList>
            <person name="Souma T."/>
            <person name="Tompson S.W."/>
            <person name="Thomson B.R."/>
            <person name="Siggs O.M."/>
            <person name="Kizhatil K."/>
            <person name="Yamaguchi S."/>
            <person name="Feng L."/>
            <person name="Limviphuvadh V."/>
            <person name="Whisenhunt K.N."/>
            <person name="Maurer-Stroh S."/>
            <person name="Yanovitch T.L."/>
            <person name="Kalaydjieva L."/>
            <person name="Azmanov D.N."/>
            <person name="Finzi S."/>
            <person name="Mauri L."/>
            <person name="Javadiyan S."/>
            <person name="Souzeau E."/>
            <person name="Zhou T."/>
            <person name="Hewitt A.W."/>
            <person name="Kloss B."/>
            <person name="Burdon K.P."/>
            <person name="Mackey D.A."/>
            <person name="Allen K.F."/>
            <person name="Ruddle J.B."/>
            <person name="Lim S.H."/>
            <person name="Rozen S."/>
            <person name="Tran-Viet K.N."/>
            <person name="Liu X."/>
            <person name="John S."/>
            <person name="Wiggs J.L."/>
            <person name="Pasutto F."/>
            <person name="Craig J.E."/>
            <person name="Jin J."/>
            <person name="Quaggin S.E."/>
            <person name="Young T.L."/>
        </authorList>
    </citation>
    <scope>DISRUPTION PHENOTYPE</scope>
</reference>
<reference key="21">
    <citation type="journal article" date="2017" name="Circ. Res.">
        <title>Polydom Is an Extracellular Matrix Protein Involved in Lymphatic Vessel Remodeling.</title>
        <authorList>
            <person name="Morooka N."/>
            <person name="Futaki S."/>
            <person name="Sato-Nishiuchi R."/>
            <person name="Nishino M."/>
            <person name="Totani Y."/>
            <person name="Shimono C."/>
            <person name="Nakano I."/>
            <person name="Nakajima H."/>
            <person name="Mochizuki N."/>
            <person name="Sekiguchi K."/>
        </authorList>
    </citation>
    <scope>DEVELOPMENTAL STAGE</scope>
</reference>
<comment type="function">
    <text evidence="8 11 12 14 17 18 21">Tyrosine-protein kinase that acts as a cell-surface receptor for ANGPT1, ANGPT2 and ANGPT4 and regulates angiogenesis, endothelial cell survival, proliferation, migration, adhesion and cell spreading, reorganization of the actin cytoskeleton, but also maintenance of vascular quiescence. Has anti-inflammatory effects by preventing the leakage of pro-inflammatory plasma proteins and leukocytes from blood vessels. Required for normal angiogenesis and heart development during embryogenesis. Required for postnatal hematopoiesis. After birth, activates or inhibits angiogenesis, depending on the context. Inhibits angiogenesis and promotes vascular stability in quiescent vessels, where endothelial cells have tight contacts. In quiescent vessels, ANGPT1 oligomers recruit TEK to cell-cell contacts, forming complexes with TEK molecules from adjoining cells, and this leads to preferential activation of phosphatidylinositol 3-kinase and the AKT1 signaling cascades. In migrating endothelial cells that lack cell-cell adhesions, ANGT1 recruits TEK to contacts with the extracellular matrix, leading to the formation of focal adhesion complexes, activation of PTK2/FAK and of the downstream kinases MAPK1/ERK2 and MAPK3/ERK1, and ultimately to the stimulation of sprouting angiogenesis. ANGPT1 signaling triggers receptor dimerization and autophosphorylation at specific tyrosine residues that then serve as binding sites for scaffold proteins and effectors. Signaling is modulated by ANGPT2 that has lower affinity for TEK, can promote TEK autophosphorylation in the absence of ANGPT1, but inhibits ANGPT1-mediated signaling by competing for the same binding site. Signaling is also modulated by formation of heterodimers with TIE1, and by proteolytic processing that gives rise to a soluble TEK extracellular domain. The soluble extracellular domain modulates signaling by functioning as decoy receptor for angiopoietins. TEK phosphorylates DOK2, GRB7, GRB14, PIK3R1, SHC1 and TIE1.</text>
</comment>
<comment type="catalytic activity">
    <reaction evidence="7 18">
        <text>L-tyrosyl-[protein] + ATP = O-phospho-L-tyrosyl-[protein] + ADP + H(+)</text>
        <dbReference type="Rhea" id="RHEA:10596"/>
        <dbReference type="Rhea" id="RHEA-COMP:10136"/>
        <dbReference type="Rhea" id="RHEA-COMP:20101"/>
        <dbReference type="ChEBI" id="CHEBI:15378"/>
        <dbReference type="ChEBI" id="CHEBI:30616"/>
        <dbReference type="ChEBI" id="CHEBI:46858"/>
        <dbReference type="ChEBI" id="CHEBI:61978"/>
        <dbReference type="ChEBI" id="CHEBI:456216"/>
        <dbReference type="EC" id="2.7.10.1"/>
    </reaction>
</comment>
<comment type="activity regulation">
    <text evidence="1">Angiopoietin binding leads to receptor dimerization and activation by autophosphorylation at Tyr-990 on the kinase activation loop.</text>
</comment>
<comment type="subunit">
    <text evidence="1 8 10 11 12 13 14 21">Homodimer. Heterodimer with TIE1. Interacts with ANGPT1, ANGPT2 and ANGPT4. At cell-cell contacts in quiescent cells, forms a signaling complex composed of ANGPT1 plus TEK molecules from two adjoining cells. In the absence of endothelial cell-cell contacts, interaction with ANGPT1 mediates contacts with the extracellular matrix. Interacts (tyrosine phosphorylated) with TNIP2. Interacts (tyrosine phosphorylated) with SHC1 (via SH2 domain) (By similarity). Interacts with PTPRB; this promotes endothelial cell-cell adhesion. Interacts with DOK2, GRB2, GRB7, GRB14, PIK3R1 and PTPN11/SHP2. Colocalizes with DOK2 at contacts with the extracellular matrix in migrating cells.</text>
</comment>
<comment type="interaction">
    <interactant intactId="EBI-7099626">
        <id>Q02858</id>
    </interactant>
    <interactant intactId="EBI-1688">
        <id>Q60631</id>
        <label>Grb2</label>
    </interactant>
    <organismsDiffer>false</organismsDiffer>
    <experiments>3</experiments>
</comment>
<comment type="interaction">
    <interactant intactId="EBI-7099626">
        <id>Q02858</id>
    </interactant>
    <interactant intactId="EBI-7100053">
        <id>Q03160</id>
        <label>Grb7</label>
    </interactant>
    <organismsDiffer>false</organismsDiffer>
    <experiments>3</experiments>
</comment>
<comment type="subcellular location">
    <subcellularLocation>
        <location>Cell membrane</location>
        <topology>Single-pass type I membrane protein</topology>
    </subcellularLocation>
    <subcellularLocation>
        <location evidence="1">Cell junction</location>
    </subcellularLocation>
    <subcellularLocation>
        <location evidence="1">Cell junction</location>
        <location evidence="1">Focal adhesion</location>
    </subcellularLocation>
    <subcellularLocation>
        <location evidence="1">Cytoplasm</location>
        <location evidence="1">Cytoskeleton</location>
    </subcellularLocation>
    <subcellularLocation>
        <location evidence="1">Secreted</location>
    </subcellularLocation>
    <text evidence="1">Recruited to cell-cell contacts in quiescent endothelial cells. Colocalizes with the actin cytoskeleton and at actin stress fibers during cell spreading. Recruited to the lower surface of migrating cells, especially the rear end of the cell. Proteolytic processing gives rise to a soluble extracellular domain that is secreted (By similarity).</text>
</comment>
<comment type="tissue specificity">
    <text evidence="19">Specifically expressed in developing vascular endothelial cells. Abundantly expressed in lung and heart, moderately in brain, liver and kidney, and weakly in thymus, spleen and testis.</text>
</comment>
<comment type="developmental stage">
    <text evidence="16 20">Expressed in dermal lymphatic endothelial cells at 16.5 and 18.5 dpc (at protein level) (PubMed:28179430). Expressed in the endocardium, dorsal aorta and maternal decidual blood vessel at 8.5 dpc (PubMed:8415706).</text>
</comment>
<comment type="domain">
    <text evidence="1">The soluble extracellular domain is functionally active in angiopoietin binding and can modulate the activity of the membrane-bound form by competing for angiopoietins.</text>
</comment>
<comment type="PTM">
    <text evidence="1">Proteolytic processing leads to the shedding of the extracellular domain (soluble TIE-2 alias sTIE-2).</text>
</comment>
<comment type="PTM">
    <text evidence="1 9 11">Autophosphorylated on tyrosine residues in response to ligand binding. Autophosphorylation occurs in trans, i.e. one subunit of the dimeric receptor phosphorylates tyrosine residues on the other subunit. Autophosphorylation occurs in a sequential manner, where Tyr-990 in the kinase activation loop is phosphorylated first, followed by autophosphorylation at Tyr-1106 and at additional tyrosine residues. ANGPT1-induced phosphorylation is impaired during hypoxia, due to increased expression of ANGPT2 (By similarity). Phosphorylation is important for interaction with GRB14, PIK3R1 and PTPN11. Phosphorylation at Tyr-1100 is important for interaction with GRB2 and GRB7. Phosphorylation at Tyr-1106 is important for interaction with DOK2 and for coupling to downstream signal transduction pathways in endothelial cells. Dephosphorylated by PTPRB.</text>
</comment>
<comment type="PTM">
    <text evidence="1">Ubiquitinated. The phosphorylated receptor is ubiquitinated and internalized, leading to its degradation (By similarity).</text>
</comment>
<comment type="disruption phenotype">
    <text evidence="15 17 18">Embryonically lethal. Embryos die at about 10 dpc, due to strongly decreased numbers of blood vessel endothelial cells, leading to severe hemorrhaging, and due to defects in heart trabeculae development. Mice display a general malformation of the vascular network with defective sprouting and dilated blood vessels. Conditional by inversion allele knockout mice don't have Schlemm's canal. Haploinsufficient mice developed a severely hypomorphic Schlemm's canal with convolutions and focal narrowing (PubMed:27270174).</text>
</comment>
<comment type="similarity">
    <text evidence="5">Belongs to the protein kinase superfamily. Tyr protein kinase family. Tie subfamily.</text>
</comment>
<keyword id="KW-0067">ATP-binding</keyword>
<keyword id="KW-0965">Cell junction</keyword>
<keyword id="KW-1003">Cell membrane</keyword>
<keyword id="KW-0963">Cytoplasm</keyword>
<keyword id="KW-0206">Cytoskeleton</keyword>
<keyword id="KW-1015">Disulfide bond</keyword>
<keyword id="KW-0245">EGF-like domain</keyword>
<keyword id="KW-0325">Glycoprotein</keyword>
<keyword id="KW-0393">Immunoglobulin domain</keyword>
<keyword id="KW-0418">Kinase</keyword>
<keyword id="KW-0472">Membrane</keyword>
<keyword id="KW-0547">Nucleotide-binding</keyword>
<keyword id="KW-0597">Phosphoprotein</keyword>
<keyword id="KW-0675">Receptor</keyword>
<keyword id="KW-1185">Reference proteome</keyword>
<keyword id="KW-0677">Repeat</keyword>
<keyword id="KW-0964">Secreted</keyword>
<keyword id="KW-0732">Signal</keyword>
<keyword id="KW-0808">Transferase</keyword>
<keyword id="KW-0812">Transmembrane</keyword>
<keyword id="KW-1133">Transmembrane helix</keyword>
<keyword id="KW-0829">Tyrosine-protein kinase</keyword>
<keyword id="KW-0832">Ubl conjugation</keyword>
<evidence type="ECO:0000250" key="1"/>
<evidence type="ECO:0000250" key="2">
    <source>
        <dbReference type="UniProtKB" id="Q02763"/>
    </source>
</evidence>
<evidence type="ECO:0000255" key="3"/>
<evidence type="ECO:0000255" key="4">
    <source>
        <dbReference type="PROSITE-ProRule" id="PRU00076"/>
    </source>
</evidence>
<evidence type="ECO:0000255" key="5">
    <source>
        <dbReference type="PROSITE-ProRule" id="PRU00159"/>
    </source>
</evidence>
<evidence type="ECO:0000255" key="6">
    <source>
        <dbReference type="PROSITE-ProRule" id="PRU00316"/>
    </source>
</evidence>
<evidence type="ECO:0000255" key="7">
    <source>
        <dbReference type="PROSITE-ProRule" id="PRU10028"/>
    </source>
</evidence>
<evidence type="ECO:0000269" key="8">
    <source>
    </source>
</evidence>
<evidence type="ECO:0000269" key="9">
    <source>
    </source>
</evidence>
<evidence type="ECO:0000269" key="10">
    <source>
    </source>
</evidence>
<evidence type="ECO:0000269" key="11">
    <source>
    </source>
</evidence>
<evidence type="ECO:0000269" key="12">
    <source>
    </source>
</evidence>
<evidence type="ECO:0000269" key="13">
    <source>
    </source>
</evidence>
<evidence type="ECO:0000269" key="14">
    <source>
    </source>
</evidence>
<evidence type="ECO:0000269" key="15">
    <source>
    </source>
</evidence>
<evidence type="ECO:0000269" key="16">
    <source>
    </source>
</evidence>
<evidence type="ECO:0000269" key="17">
    <source>
    </source>
</evidence>
<evidence type="ECO:0000269" key="18">
    <source>
    </source>
</evidence>
<evidence type="ECO:0000269" key="19">
    <source>
    </source>
</evidence>
<evidence type="ECO:0000269" key="20">
    <source>
    </source>
</evidence>
<evidence type="ECO:0000269" key="21">
    <source>
    </source>
</evidence>
<evidence type="ECO:0000305" key="22"/>
<evidence type="ECO:0000305" key="23">
    <source>
    </source>
</evidence>
<feature type="signal peptide" evidence="1">
    <location>
        <begin position="1"/>
        <end position="22"/>
    </location>
</feature>
<feature type="chain" id="PRO_0000024475" description="Angiopoietin-1 receptor">
    <location>
        <begin position="23"/>
        <end position="1122"/>
    </location>
</feature>
<feature type="topological domain" description="Extracellular" evidence="3">
    <location>
        <begin position="23"/>
        <end position="746"/>
    </location>
</feature>
<feature type="transmembrane region" description="Helical" evidence="3">
    <location>
        <begin position="747"/>
        <end position="767"/>
    </location>
</feature>
<feature type="topological domain" description="Cytoplasmic" evidence="3">
    <location>
        <begin position="768"/>
        <end position="1122"/>
    </location>
</feature>
<feature type="domain" description="Ig-like C2-type 1">
    <location>
        <begin position="44"/>
        <end position="123"/>
    </location>
</feature>
<feature type="domain" description="EGF-like 1" evidence="4">
    <location>
        <begin position="210"/>
        <end position="252"/>
    </location>
</feature>
<feature type="domain" description="EGF-like 2" evidence="4">
    <location>
        <begin position="254"/>
        <end position="299"/>
    </location>
</feature>
<feature type="domain" description="EGF-like 3" evidence="4">
    <location>
        <begin position="301"/>
        <end position="341"/>
    </location>
</feature>
<feature type="domain" description="Ig-like C2-type 2">
    <location>
        <begin position="350"/>
        <end position="440"/>
    </location>
</feature>
<feature type="domain" description="Fibronectin type-III 1" evidence="6">
    <location>
        <begin position="444"/>
        <end position="539"/>
    </location>
</feature>
<feature type="domain" description="Fibronectin type-III 2" evidence="6">
    <location>
        <begin position="543"/>
        <end position="635"/>
    </location>
</feature>
<feature type="domain" description="Fibronectin type-III 3" evidence="6">
    <location>
        <begin position="640"/>
        <end position="733"/>
    </location>
</feature>
<feature type="domain" description="Protein kinase" evidence="5">
    <location>
        <begin position="822"/>
        <end position="1094"/>
    </location>
</feature>
<feature type="active site" description="Proton acceptor" evidence="5 7">
    <location>
        <position position="962"/>
    </location>
</feature>
<feature type="binding site" evidence="5">
    <location>
        <begin position="828"/>
        <end position="836"/>
    </location>
    <ligand>
        <name>ATP</name>
        <dbReference type="ChEBI" id="CHEBI:30616"/>
    </ligand>
</feature>
<feature type="binding site" evidence="5">
    <location>
        <position position="853"/>
    </location>
    <ligand>
        <name>ATP</name>
        <dbReference type="ChEBI" id="CHEBI:30616"/>
    </ligand>
</feature>
<feature type="modified residue" description="Phosphotyrosine; by autocatalysis" evidence="2">
    <location>
        <position position="858"/>
    </location>
</feature>
<feature type="modified residue" description="Phosphotyrosine; by autocatalysis" evidence="2">
    <location>
        <position position="990"/>
    </location>
</feature>
<feature type="modified residue" description="Phosphotyrosine; by autocatalysis" evidence="23">
    <location>
        <position position="1100"/>
    </location>
</feature>
<feature type="modified residue" description="Phosphotyrosine; by autocatalysis" evidence="11">
    <location>
        <position position="1106"/>
    </location>
</feature>
<feature type="glycosylation site" description="N-linked (GlcNAc...) asparagine" evidence="3">
    <location>
        <position position="140"/>
    </location>
</feature>
<feature type="glycosylation site" description="N-linked (GlcNAc...) asparagine" evidence="3">
    <location>
        <position position="158"/>
    </location>
</feature>
<feature type="glycosylation site" description="N-linked (GlcNAc...) asparagine" evidence="3">
    <location>
        <position position="399"/>
    </location>
</feature>
<feature type="glycosylation site" description="N-linked (GlcNAc...) asparagine" evidence="3">
    <location>
        <position position="438"/>
    </location>
</feature>
<feature type="glycosylation site" description="N-linked (GlcNAc...) asparagine" evidence="3">
    <location>
        <position position="464"/>
    </location>
</feature>
<feature type="glycosylation site" description="N-linked (GlcNAc...) asparagine" evidence="3">
    <location>
        <position position="558"/>
    </location>
</feature>
<feature type="glycosylation site" description="N-linked (GlcNAc...) asparagine" evidence="3">
    <location>
        <position position="595"/>
    </location>
</feature>
<feature type="glycosylation site" description="N-linked (GlcNAc...) asparagine" evidence="3">
    <location>
        <position position="648"/>
    </location>
</feature>
<feature type="glycosylation site" description="N-linked (GlcNAc...) asparagine" evidence="3">
    <location>
        <position position="690"/>
    </location>
</feature>
<feature type="disulfide bond" evidence="1">
    <location>
        <begin position="44"/>
        <end position="102"/>
    </location>
</feature>
<feature type="disulfide bond" evidence="1">
    <location>
        <begin position="211"/>
        <end position="220"/>
    </location>
</feature>
<feature type="disulfide bond" evidence="1">
    <location>
        <begin position="224"/>
        <end position="233"/>
    </location>
</feature>
<feature type="disulfide bond" evidence="1">
    <location>
        <begin position="227"/>
        <end position="240"/>
    </location>
</feature>
<feature type="disulfide bond" evidence="1">
    <location>
        <begin position="242"/>
        <end position="251"/>
    </location>
</feature>
<feature type="disulfide bond" evidence="1">
    <location>
        <begin position="255"/>
        <end position="264"/>
    </location>
</feature>
<feature type="disulfide bond" evidence="1">
    <location>
        <begin position="268"/>
        <end position="274"/>
    </location>
</feature>
<feature type="disulfide bond" evidence="1">
    <location>
        <begin position="280"/>
        <end position="287"/>
    </location>
</feature>
<feature type="disulfide bond" evidence="1">
    <location>
        <begin position="289"/>
        <end position="298"/>
    </location>
</feature>
<feature type="disulfide bond" evidence="1">
    <location>
        <begin position="302"/>
        <end position="311"/>
    </location>
</feature>
<feature type="disulfide bond" evidence="1">
    <location>
        <begin position="315"/>
        <end position="323"/>
    </location>
</feature>
<feature type="disulfide bond" evidence="1">
    <location>
        <begin position="317"/>
        <end position="329"/>
    </location>
</feature>
<feature type="disulfide bond" evidence="1">
    <location>
        <begin position="331"/>
        <end position="340"/>
    </location>
</feature>
<feature type="disulfide bond" evidence="1">
    <location>
        <begin position="370"/>
        <end position="424"/>
    </location>
</feature>
<feature type="mutagenesis site" description="Loss of kinase activity." evidence="11 18">
    <original>K</original>
    <variation>A</variation>
    <location>
        <position position="853"/>
    </location>
</feature>
<feature type="mutagenesis site" description="Reduced levels of autophosphorylation. Abolishes interaction with GRB2 and GRB7. Abolishes phosphorylation of GRB7 and PIK3R1." evidence="8 11 21">
    <original>Y</original>
    <variation>F</variation>
    <location>
        <position position="1100"/>
    </location>
</feature>
<feature type="mutagenesis site" description="Reduced levels of autophosphorylation." evidence="11">
    <original>Y</original>
    <variation>F</variation>
    <location>
        <position position="1106"/>
    </location>
</feature>
<feature type="sequence conflict" description="In Ref. 3; BAA02883." evidence="22" ref="3">
    <original>FIHSVPRHEVP</original>
    <variation>LHPLSAPGMKYL</variation>
    <location>
        <begin position="161"/>
        <end position="171"/>
    </location>
</feature>
<feature type="sequence conflict" description="In Ref. 2; CAA47857." evidence="22" ref="2">
    <original>S</original>
    <variation>C</variation>
    <location>
        <position position="538"/>
    </location>
</feature>
<feature type="sequence conflict" description="In Ref. 2; CAA47857 and 4; AAB28663." evidence="22" ref="2 4">
    <original>A</original>
    <variation>G</variation>
    <location>
        <position position="736"/>
    </location>
</feature>
<feature type="sequence conflict" description="In Ref. 3; BAA02883." evidence="22" ref="3">
    <original>MLLIAILGSAGMTCITV</original>
    <variation>DATHSHPWVWNDFASPC</variation>
    <location>
        <begin position="745"/>
        <end position="761"/>
    </location>
</feature>
<feature type="sequence conflict" description="In Ref. 3; BAA02883 and 6; no nucleotide entry." evidence="22" ref="3 6">
    <original>N</original>
    <variation>NV</variation>
    <location>
        <position position="786"/>
    </location>
</feature>
<feature type="sequence conflict" description="In Ref. 3; BAA02883." evidence="22" ref="3">
    <original>R</original>
    <variation>G</variation>
    <location>
        <position position="913"/>
    </location>
</feature>
<feature type="sequence conflict" description="In Ref. 3; BAA02883." evidence="22" ref="3">
    <original>AIANSTA</original>
    <variation>CHRQQYS</variation>
    <location>
        <begin position="925"/>
        <end position="931"/>
    </location>
</feature>
<feature type="sequence conflict" description="In Ref. 3; BAA02883." evidence="22" ref="3">
    <original>S</original>
    <variation>P</variation>
    <location>
        <position position="1117"/>
    </location>
</feature>
<accession>Q02858</accession>